<comment type="function">
    <text evidence="3 4 5 6">Participates in various redox reactions through the reversible oxidation of its active center dithiol to a disulfide and catalyzes dithiol-disulfide exchange reactions (PubMed:11013257, PubMed:20673832). By modifying the redox status of targeted proteins, induces changes in their structure and activity (PubMed:19360125, PubMed:20673832). Reduces oxidized glutathione (GSSG), thereby acting as a backup for the glutathione redox system (PubMed:11013257). Reduces nitroglutathione (GSNO), a compound involved in the transport of nitric oxide (NO) (PubMed:11013257). Also reduces oxidative stress by detoxifying hydrogen peroxide, tert-butyl hydroperoxide and cumene hydroperoxide (PubMed:14962358). Activates ornithine aminotransferase OAT by reducing a disulfide bond in the substrate binding loop, thereby enhancing the affinity of OAT for its substrates (PubMed:20673832). May reduce S-adenosyl-L-homocysteine hydrolase SAHH (PubMed:19360125).</text>
</comment>
<comment type="biophysicochemical properties">
    <redoxPotential>
        <text evidence="3">E(0) is -270 mV (at pH 7.4 and 25 degrees Celsius).</text>
    </redoxPotential>
</comment>
<comment type="subcellular location">
    <subcellularLocation>
        <location evidence="7">Cytoplasm</location>
    </subcellularLocation>
</comment>
<comment type="PTM">
    <text evidence="8">The disulfide bond between Cys-30 and Cys-33 acts as a redox-active center and is reduced by thioredoxin reductase TRXR.</text>
</comment>
<comment type="similarity">
    <text evidence="12">Belongs to the thioredoxin family.</text>
</comment>
<dbReference type="EMBL" id="AF202664">
    <property type="protein sequence ID" value="AAF34541.1"/>
    <property type="molecule type" value="mRNA"/>
</dbReference>
<dbReference type="EMBL" id="LN999946">
    <property type="protein sequence ID" value="CZU00268.1"/>
    <property type="molecule type" value="Genomic_DNA"/>
</dbReference>
<dbReference type="RefSeq" id="XP_001348719.1">
    <property type="nucleotide sequence ID" value="XM_001348683.1"/>
</dbReference>
<dbReference type="PDB" id="1SYR">
    <property type="method" value="X-ray"/>
    <property type="resolution" value="2.95 A"/>
    <property type="chains" value="A/B/C/D/E/F/G/H/I/J/K/L=1-104"/>
</dbReference>
<dbReference type="PDB" id="2MMN">
    <property type="method" value="NMR"/>
    <property type="chains" value="A=2-104"/>
</dbReference>
<dbReference type="PDB" id="2MMO">
    <property type="method" value="NMR"/>
    <property type="chains" value="A=2-104"/>
</dbReference>
<dbReference type="PDB" id="4J56">
    <property type="method" value="X-ray"/>
    <property type="resolution" value="2.37 A"/>
    <property type="chains" value="E/F/G/H=2-104"/>
</dbReference>
<dbReference type="PDB" id="4J57">
    <property type="method" value="X-ray"/>
    <property type="resolution" value="2.50 A"/>
    <property type="chains" value="E/F=2-104"/>
</dbReference>
<dbReference type="PDBsum" id="1SYR"/>
<dbReference type="PDBsum" id="2MMN"/>
<dbReference type="PDBsum" id="2MMO"/>
<dbReference type="PDBsum" id="4J56"/>
<dbReference type="PDBsum" id="4J57"/>
<dbReference type="BMRB" id="Q7KQL8"/>
<dbReference type="SMR" id="Q7KQL8"/>
<dbReference type="BioGRID" id="1207479">
    <property type="interactions" value="1"/>
</dbReference>
<dbReference type="IntAct" id="Q7KQL8">
    <property type="interactions" value="1"/>
</dbReference>
<dbReference type="STRING" id="36329.Q7KQL8"/>
<dbReference type="PaxDb" id="5833-PF14_0545"/>
<dbReference type="EnsemblProtists" id="CZU00268">
    <property type="protein sequence ID" value="CZU00268"/>
    <property type="gene ID" value="PF3D7_1457200"/>
</dbReference>
<dbReference type="GeneID" id="812127"/>
<dbReference type="KEGG" id="pfa:PF3D7_1457200"/>
<dbReference type="VEuPathDB" id="PlasmoDB:PF3D7_1457200"/>
<dbReference type="VEuPathDB" id="PlasmoDB:Pf7G8-2_000531000"/>
<dbReference type="VEuPathDB" id="PlasmoDB:Pf7G8_140062400"/>
<dbReference type="VEuPathDB" id="PlasmoDB:PfCD01_140062500"/>
<dbReference type="VEuPathDB" id="PlasmoDB:PfDd2_140061600"/>
<dbReference type="VEuPathDB" id="PlasmoDB:PfGA01_140062600"/>
<dbReference type="VEuPathDB" id="PlasmoDB:PfGB4_140063300"/>
<dbReference type="VEuPathDB" id="PlasmoDB:PfGN01_140062500"/>
<dbReference type="VEuPathDB" id="PlasmoDB:PfHB3_140062900"/>
<dbReference type="VEuPathDB" id="PlasmoDB:PfIT_140063600"/>
<dbReference type="VEuPathDB" id="PlasmoDB:PfKE01_140062000"/>
<dbReference type="VEuPathDB" id="PlasmoDB:PfKH01_140062700"/>
<dbReference type="VEuPathDB" id="PlasmoDB:PfKH02_140062900"/>
<dbReference type="VEuPathDB" id="PlasmoDB:PfML01_140062800"/>
<dbReference type="VEuPathDB" id="PlasmoDB:PfNF135_140061300"/>
<dbReference type="VEuPathDB" id="PlasmoDB:PfNF166_140060100"/>
<dbReference type="VEuPathDB" id="PlasmoDB:PfNF54_140060900"/>
<dbReference type="VEuPathDB" id="PlasmoDB:PfSD01_140060500"/>
<dbReference type="VEuPathDB" id="PlasmoDB:PfSN01_140064400"/>
<dbReference type="VEuPathDB" id="PlasmoDB:PfTG01_140062500"/>
<dbReference type="HOGENOM" id="CLU_090389_14_6_1"/>
<dbReference type="OMA" id="HIHYVTD"/>
<dbReference type="OrthoDB" id="2121326at2759"/>
<dbReference type="PhylomeDB" id="Q7KQL8"/>
<dbReference type="Reactome" id="R-PFA-3299685">
    <property type="pathway name" value="Detoxification of Reactive Oxygen Species"/>
</dbReference>
<dbReference type="Reactome" id="R-PFA-499943">
    <property type="pathway name" value="Interconversion of nucleotide di- and triphosphates"/>
</dbReference>
<dbReference type="Reactome" id="R-PFA-5628897">
    <property type="pathway name" value="TP53 Regulates Metabolic Genes"/>
</dbReference>
<dbReference type="Reactome" id="R-PFA-844456">
    <property type="pathway name" value="The NLRP3 inflammasome"/>
</dbReference>
<dbReference type="EvolutionaryTrace" id="Q7KQL8"/>
<dbReference type="Proteomes" id="UP000001450">
    <property type="component" value="Chromosome 14"/>
</dbReference>
<dbReference type="GO" id="GO:0005829">
    <property type="term" value="C:cytosol"/>
    <property type="evidence" value="ECO:0000314"/>
    <property type="project" value="GeneDB"/>
</dbReference>
<dbReference type="GO" id="GO:0015035">
    <property type="term" value="F:protein-disulfide reductase activity"/>
    <property type="evidence" value="ECO:0000314"/>
    <property type="project" value="UniProtKB"/>
</dbReference>
<dbReference type="CDD" id="cd02947">
    <property type="entry name" value="TRX_family"/>
    <property type="match status" value="1"/>
</dbReference>
<dbReference type="FunFam" id="3.40.30.10:FF:000104">
    <property type="entry name" value="Thioredoxin"/>
    <property type="match status" value="1"/>
</dbReference>
<dbReference type="Gene3D" id="3.40.30.10">
    <property type="entry name" value="Glutaredoxin"/>
    <property type="match status" value="1"/>
</dbReference>
<dbReference type="InterPro" id="IPR005746">
    <property type="entry name" value="Thioredoxin"/>
</dbReference>
<dbReference type="InterPro" id="IPR036249">
    <property type="entry name" value="Thioredoxin-like_sf"/>
</dbReference>
<dbReference type="InterPro" id="IPR017937">
    <property type="entry name" value="Thioredoxin_CS"/>
</dbReference>
<dbReference type="InterPro" id="IPR013766">
    <property type="entry name" value="Thioredoxin_domain"/>
</dbReference>
<dbReference type="NCBIfam" id="TIGR01068">
    <property type="entry name" value="thioredoxin"/>
    <property type="match status" value="1"/>
</dbReference>
<dbReference type="PANTHER" id="PTHR46115">
    <property type="entry name" value="THIOREDOXIN-LIKE PROTEIN 1"/>
    <property type="match status" value="1"/>
</dbReference>
<dbReference type="Pfam" id="PF00085">
    <property type="entry name" value="Thioredoxin"/>
    <property type="match status" value="1"/>
</dbReference>
<dbReference type="PIRSF" id="PIRSF000077">
    <property type="entry name" value="Thioredoxin"/>
    <property type="match status" value="1"/>
</dbReference>
<dbReference type="PRINTS" id="PR00421">
    <property type="entry name" value="THIOREDOXIN"/>
</dbReference>
<dbReference type="SUPFAM" id="SSF52833">
    <property type="entry name" value="Thioredoxin-like"/>
    <property type="match status" value="1"/>
</dbReference>
<dbReference type="PROSITE" id="PS00194">
    <property type="entry name" value="THIOREDOXIN_1"/>
    <property type="match status" value="1"/>
</dbReference>
<dbReference type="PROSITE" id="PS51352">
    <property type="entry name" value="THIOREDOXIN_2"/>
    <property type="match status" value="1"/>
</dbReference>
<sequence>MVKIVTSQAEFDSIISQNELVIVDFFAEWCGPCKRIAPFYEECSKTYTKMVFIKVDVDEVSEVTEKENITSMPTFKVYKNGSSVDTLLGANDSALKQLIEKYAA</sequence>
<organism>
    <name type="scientific">Plasmodium falciparum (isolate 3D7)</name>
    <dbReference type="NCBI Taxonomy" id="36329"/>
    <lineage>
        <taxon>Eukaryota</taxon>
        <taxon>Sar</taxon>
        <taxon>Alveolata</taxon>
        <taxon>Apicomplexa</taxon>
        <taxon>Aconoidasida</taxon>
        <taxon>Haemosporida</taxon>
        <taxon>Plasmodiidae</taxon>
        <taxon>Plasmodium</taxon>
        <taxon>Plasmodium (Laverania)</taxon>
    </lineage>
</organism>
<accession>Q7KQL8</accession>
<accession>A0A144A4E0</accession>
<accession>Q9NIR2</accession>
<protein>
    <recommendedName>
        <fullName evidence="11">Thioredoxin 1</fullName>
        <shortName evidence="11">PfTRX1</shortName>
    </recommendedName>
</protein>
<gene>
    <name evidence="11" type="primary">TRX1</name>
    <name type="ORF">PF14_0545</name>
    <name type="ORF">PF3D7_1457200</name>
</gene>
<name>THIO1_PLAF7</name>
<evidence type="ECO:0000250" key="1">
    <source>
        <dbReference type="UniProtKB" id="P10599"/>
    </source>
</evidence>
<evidence type="ECO:0000255" key="2">
    <source>
        <dbReference type="PROSITE-ProRule" id="PRU00691"/>
    </source>
</evidence>
<evidence type="ECO:0000269" key="3">
    <source>
    </source>
</evidence>
<evidence type="ECO:0000269" key="4">
    <source>
    </source>
</evidence>
<evidence type="ECO:0000269" key="5">
    <source>
    </source>
</evidence>
<evidence type="ECO:0000269" key="6">
    <source>
    </source>
</evidence>
<evidence type="ECO:0000269" key="7">
    <source>
    </source>
</evidence>
<evidence type="ECO:0000269" key="8">
    <source>
    </source>
</evidence>
<evidence type="ECO:0000269" key="9">
    <source ref="7"/>
</evidence>
<evidence type="ECO:0000269" key="10">
    <source ref="9"/>
</evidence>
<evidence type="ECO:0000303" key="11">
    <source>
    </source>
</evidence>
<evidence type="ECO:0000305" key="12"/>
<evidence type="ECO:0007744" key="13">
    <source>
        <dbReference type="PDB" id="1SYR"/>
    </source>
</evidence>
<evidence type="ECO:0007744" key="14">
    <source>
        <dbReference type="PDB" id="2MMN"/>
    </source>
</evidence>
<evidence type="ECO:0007744" key="15">
    <source>
        <dbReference type="PDB" id="2MMO"/>
    </source>
</evidence>
<evidence type="ECO:0007744" key="16">
    <source>
        <dbReference type="PDB" id="4J56"/>
    </source>
</evidence>
<evidence type="ECO:0007744" key="17">
    <source>
        <dbReference type="PDB" id="4J57"/>
    </source>
</evidence>
<evidence type="ECO:0007829" key="18">
    <source>
        <dbReference type="PDB" id="4J56"/>
    </source>
</evidence>
<reference key="1">
    <citation type="journal article" date="2000" name="J. Biol. Chem.">
        <title>The thioredoxin system of the malaria parasite Plasmodium falciparum. Glutathione reduction revisited.</title>
        <authorList>
            <person name="Kanzok S.M."/>
            <person name="Schirmer R.H."/>
            <person name="Turbachova I."/>
            <person name="Iozef R."/>
            <person name="Becker K."/>
        </authorList>
    </citation>
    <scope>NUCLEOTIDE SEQUENCE [MRNA]</scope>
    <scope>FUNCTION</scope>
    <scope>BIOPHYSICOCHEMICAL PROPERTIES</scope>
</reference>
<reference key="2">
    <citation type="journal article" date="2002" name="Nature">
        <title>Genome sequence of the human malaria parasite Plasmodium falciparum.</title>
        <authorList>
            <person name="Gardner M.J."/>
            <person name="Hall N."/>
            <person name="Fung E."/>
            <person name="White O."/>
            <person name="Berriman M."/>
            <person name="Hyman R.W."/>
            <person name="Carlton J.M."/>
            <person name="Pain A."/>
            <person name="Nelson K.E."/>
            <person name="Bowman S."/>
            <person name="Paulsen I.T."/>
            <person name="James K.D."/>
            <person name="Eisen J.A."/>
            <person name="Rutherford K.M."/>
            <person name="Salzberg S.L."/>
            <person name="Craig A."/>
            <person name="Kyes S."/>
            <person name="Chan M.-S."/>
            <person name="Nene V."/>
            <person name="Shallom S.J."/>
            <person name="Suh B."/>
            <person name="Peterson J."/>
            <person name="Angiuoli S."/>
            <person name="Pertea M."/>
            <person name="Allen J."/>
            <person name="Selengut J."/>
            <person name="Haft D."/>
            <person name="Mather M.W."/>
            <person name="Vaidya A.B."/>
            <person name="Martin D.M.A."/>
            <person name="Fairlamb A.H."/>
            <person name="Fraunholz M.J."/>
            <person name="Roos D.S."/>
            <person name="Ralph S.A."/>
            <person name="McFadden G.I."/>
            <person name="Cummings L.M."/>
            <person name="Subramanian G.M."/>
            <person name="Mungall C."/>
            <person name="Venter J.C."/>
            <person name="Carucci D.J."/>
            <person name="Hoffman S.L."/>
            <person name="Newbold C."/>
            <person name="Davis R.W."/>
            <person name="Fraser C.M."/>
            <person name="Barrell B.G."/>
        </authorList>
    </citation>
    <scope>NUCLEOTIDE SEQUENCE [LARGE SCALE GENOMIC DNA]</scope>
    <source>
        <strain>3D7</strain>
    </source>
</reference>
<reference key="3">
    <citation type="journal article" date="2003" name="Redox Rep.">
        <title>Plasmodium falciparum thioredoxins and glutaredoxins as central players in redox metabolism.</title>
        <authorList>
            <person name="Rahlfs S."/>
            <person name="Nickel C."/>
            <person name="Deponte M."/>
            <person name="Schirmer R.H."/>
            <person name="Becker K."/>
        </authorList>
    </citation>
    <scope>FUNCTION</scope>
</reference>
<reference key="4">
    <citation type="journal article" date="2009" name="PLoS Pathog.">
        <title>Identification of proteins targeted by the thioredoxin superfamily in Plasmodium falciparum.</title>
        <authorList>
            <person name="Sturm N."/>
            <person name="Jortzik E."/>
            <person name="Mailu B.M."/>
            <person name="Koncarevic S."/>
            <person name="Deponte M."/>
            <person name="Forchhammer K."/>
            <person name="Rahlfs S."/>
            <person name="Becker K."/>
        </authorList>
    </citation>
    <scope>FUNCTION</scope>
    <scope>MUTAGENESIS OF CYS-30 AND CYS-33</scope>
</reference>
<reference key="5">
    <citation type="journal article" date="2010" name="J. Mol. Biol.">
        <title>Redox regulation of Plasmodium falciparum ornithine delta-aminotransferase.</title>
        <authorList>
            <person name="Jortzik E."/>
            <person name="Fritz-Wolf K."/>
            <person name="Sturm N."/>
            <person name="Hipp M."/>
            <person name="Rahlfs S."/>
            <person name="Becker K."/>
        </authorList>
    </citation>
    <scope>FUNCTION</scope>
    <scope>MUTAGENESIS OF CYS-30; CYS-33 AND CYS-43</scope>
</reference>
<reference key="6">
    <citation type="journal article" date="2010" name="PLoS Pathog.">
        <title>Compartmentation of redox metabolism in malaria parasites.</title>
        <authorList>
            <person name="Kehr S."/>
            <person name="Sturm N."/>
            <person name="Rahlfs S."/>
            <person name="Przyborski J.M."/>
            <person name="Becker K."/>
        </authorList>
    </citation>
    <scope>SUBCELLULAR LOCATION</scope>
</reference>
<reference evidence="13" key="7">
    <citation type="submission" date="2004-04" db="PDB data bank">
        <title>Structural genomics of pathogenic protozoa initial structural analysis of Plasmodium falciparum thioredoxin.</title>
        <authorList>
            <person name="Robien M.A."/>
            <person name="Hol W.G.J."/>
        </authorList>
    </citation>
    <scope>X-RAY CRYSTALLOGRAPHY (2.95 ANGSTROMS)</scope>
    <scope>DISULFIDE BOND</scope>
</reference>
<reference evidence="16 17" key="8">
    <citation type="journal article" date="2013" name="J. Mol. Biol.">
        <title>Crystal structure of the Plasmodium falciparum thioredoxin reductase-thioredoxin complex.</title>
        <authorList>
            <person name="Fritz-Wolf K."/>
            <person name="Jortzik E."/>
            <person name="Stumpf M."/>
            <person name="Preuss J."/>
            <person name="Iozef R."/>
            <person name="Rahlfs S."/>
            <person name="Becker K."/>
        </authorList>
    </citation>
    <scope>X-RAY CRYSTALLOGRAPHY (2.37 ANGSTROMS) OF 2-104 OF MUTANT SER-30 IN COMPLEX WITH TRXR</scope>
    <scope>DISULFIDE BOND</scope>
</reference>
<reference evidence="14 15" key="9">
    <citation type="submission" date="2014-03" db="PDB data bank">
        <title>Solution Structure of Plasmodium falciparum Thioredoxin.</title>
        <authorList>
            <person name="Munte C."/>
            <person name="Kalbitzer H."/>
            <person name="Schirmer R."/>
        </authorList>
    </citation>
    <scope>STRUCTURE BY NMR OF 2-104</scope>
    <scope>DISULFIDE BOND</scope>
</reference>
<feature type="chain" id="PRO_0000233976" description="Thioredoxin 1">
    <location>
        <begin position="1"/>
        <end position="104"/>
    </location>
</feature>
<feature type="domain" description="Thioredoxin" evidence="2">
    <location>
        <begin position="2"/>
        <end position="104"/>
    </location>
</feature>
<feature type="active site" description="Nucleophile" evidence="1">
    <location>
        <position position="30"/>
    </location>
</feature>
<feature type="active site" description="Nucleophile" evidence="1">
    <location>
        <position position="33"/>
    </location>
</feature>
<feature type="site" description="Deprotonates C-terminal active site Cys" evidence="12">
    <location>
        <position position="24"/>
    </location>
</feature>
<feature type="site" description="Contributes to redox potential value" evidence="12">
    <location>
        <position position="31"/>
    </location>
</feature>
<feature type="site" description="Contributes to redox potential value" evidence="12">
    <location>
        <position position="32"/>
    </location>
</feature>
<feature type="disulfide bond" description="Redox-active" evidence="2 8 9 10 13 15 16 17">
    <location>
        <begin position="30"/>
        <end position="33"/>
    </location>
</feature>
<feature type="mutagenesis site" description="Does not stably interact with OAT and fails to increase OAT catalytic activity; when associated with S-33 or S-33 and S-43. Does not stably interact with SAHH; when associated with S-33." evidence="5 6">
    <original>C</original>
    <variation>S</variation>
    <location>
        <position position="30"/>
    </location>
</feature>
<feature type="mutagenesis site" description="Forms a stable disulfide intermediate with OAT. Fails to increase OAT catalytic activity. Does not stably interact with OAT and fails to increase OAT catalytic activity; when associated with S-30 and/or S-43. Forms a stable disulfide intermediate with SAHH. Does not stably interact with SAHH; when associated with S-30." evidence="5 6">
    <original>C</original>
    <variation>S</variation>
    <location>
        <position position="33"/>
    </location>
</feature>
<feature type="mutagenesis site" description="Does not stably interact with OAT and fails to increase OAT catalytic activity; when associated with S-33 or S-30 and S-33." evidence="6">
    <original>C</original>
    <variation>S</variation>
    <location>
        <position position="43"/>
    </location>
</feature>
<feature type="sequence conflict" description="In Ref. 1; AAF34541." evidence="12" ref="1">
    <original>A</original>
    <variation>S</variation>
    <location>
        <position position="9"/>
    </location>
</feature>
<feature type="sequence conflict" description="In Ref. 1; AAF34541." evidence="12" ref="1">
    <original>K</original>
    <variation>I</variation>
    <location>
        <position position="101"/>
    </location>
</feature>
<feature type="strand" evidence="18">
    <location>
        <begin position="2"/>
        <end position="5"/>
    </location>
</feature>
<feature type="helix" evidence="18">
    <location>
        <begin position="8"/>
        <end position="18"/>
    </location>
</feature>
<feature type="strand" evidence="18">
    <location>
        <begin position="19"/>
        <end position="26"/>
    </location>
</feature>
<feature type="helix" evidence="18">
    <location>
        <begin position="31"/>
        <end position="46"/>
    </location>
</feature>
<feature type="strand" evidence="18">
    <location>
        <begin position="49"/>
        <end position="56"/>
    </location>
</feature>
<feature type="turn" evidence="18">
    <location>
        <begin position="57"/>
        <end position="60"/>
    </location>
</feature>
<feature type="helix" evidence="18">
    <location>
        <begin position="61"/>
        <end position="67"/>
    </location>
</feature>
<feature type="strand" evidence="18">
    <location>
        <begin position="71"/>
        <end position="79"/>
    </location>
</feature>
<feature type="strand" evidence="18">
    <location>
        <begin position="82"/>
        <end position="90"/>
    </location>
</feature>
<feature type="helix" evidence="18">
    <location>
        <begin position="92"/>
        <end position="103"/>
    </location>
</feature>
<proteinExistence type="evidence at protein level"/>
<keyword id="KW-0002">3D-structure</keyword>
<keyword id="KW-0963">Cytoplasm</keyword>
<keyword id="KW-1015">Disulfide bond</keyword>
<keyword id="KW-0249">Electron transport</keyword>
<keyword id="KW-0676">Redox-active center</keyword>
<keyword id="KW-1185">Reference proteome</keyword>
<keyword id="KW-0813">Transport</keyword>